<proteinExistence type="inferred from homology"/>
<evidence type="ECO:0000255" key="1">
    <source>
        <dbReference type="HAMAP-Rule" id="MF_00272"/>
    </source>
</evidence>
<evidence type="ECO:0000255" key="2">
    <source>
        <dbReference type="PROSITE-ProRule" id="PRU01066"/>
    </source>
</evidence>
<comment type="function">
    <text evidence="1">The glycine cleavage system catalyzes the degradation of glycine. The H protein shuttles the methylamine group of glycine from the P protein to the T protein.</text>
</comment>
<comment type="cofactor">
    <cofactor evidence="1">
        <name>(R)-lipoate</name>
        <dbReference type="ChEBI" id="CHEBI:83088"/>
    </cofactor>
    <text evidence="1">Binds 1 lipoyl cofactor covalently.</text>
</comment>
<comment type="subunit">
    <text evidence="1">The glycine cleavage system is composed of four proteins: P, T, L and H.</text>
</comment>
<comment type="similarity">
    <text evidence="1">Belongs to the GcvH family.</text>
</comment>
<name>GCSH_NEIG1</name>
<keyword id="KW-0450">Lipoyl</keyword>
<keyword id="KW-1185">Reference proteome</keyword>
<sequence length="133" mass="14217">MENQTMSNNIPTELKYVASHEWLRLEEDGTITVGITHHAQELLGDIVFVELPEVGANLAAEEQSGVVESVKAASDVYAPIAGEVVAVNDDLPGAPETANSDPYGAGWFFKIKPANPADYDGLLTAEQYAGEVD</sequence>
<feature type="chain" id="PRO_0000302399" description="Glycine cleavage system H protein">
    <location>
        <begin position="1"/>
        <end position="133"/>
    </location>
</feature>
<feature type="domain" description="Lipoyl-binding" evidence="2">
    <location>
        <begin position="30"/>
        <end position="112"/>
    </location>
</feature>
<feature type="modified residue" description="N6-lipoyllysine" evidence="1">
    <location>
        <position position="71"/>
    </location>
</feature>
<accession>Q5F6Y8</accession>
<dbReference type="EMBL" id="AE004969">
    <property type="protein sequence ID" value="AAW90049.2"/>
    <property type="molecule type" value="Genomic_DNA"/>
</dbReference>
<dbReference type="SMR" id="Q5F6Y8"/>
<dbReference type="STRING" id="242231.NGO_1404"/>
<dbReference type="KEGG" id="ngo:NGO_1404"/>
<dbReference type="PATRIC" id="fig|242231.10.peg.1654"/>
<dbReference type="HOGENOM" id="CLU_097408_2_1_4"/>
<dbReference type="Proteomes" id="UP000000535">
    <property type="component" value="Chromosome"/>
</dbReference>
<dbReference type="GO" id="GO:0005829">
    <property type="term" value="C:cytosol"/>
    <property type="evidence" value="ECO:0007669"/>
    <property type="project" value="TreeGrafter"/>
</dbReference>
<dbReference type="GO" id="GO:0005960">
    <property type="term" value="C:glycine cleavage complex"/>
    <property type="evidence" value="ECO:0007669"/>
    <property type="project" value="InterPro"/>
</dbReference>
<dbReference type="GO" id="GO:0019464">
    <property type="term" value="P:glycine decarboxylation via glycine cleavage system"/>
    <property type="evidence" value="ECO:0007669"/>
    <property type="project" value="UniProtKB-UniRule"/>
</dbReference>
<dbReference type="CDD" id="cd06848">
    <property type="entry name" value="GCS_H"/>
    <property type="match status" value="1"/>
</dbReference>
<dbReference type="Gene3D" id="2.40.50.100">
    <property type="match status" value="1"/>
</dbReference>
<dbReference type="HAMAP" id="MF_00272">
    <property type="entry name" value="GcvH"/>
    <property type="match status" value="1"/>
</dbReference>
<dbReference type="InterPro" id="IPR000089">
    <property type="entry name" value="Biotin_lipoyl"/>
</dbReference>
<dbReference type="InterPro" id="IPR002930">
    <property type="entry name" value="GCV_H"/>
</dbReference>
<dbReference type="InterPro" id="IPR033753">
    <property type="entry name" value="GCV_H/Fam206"/>
</dbReference>
<dbReference type="InterPro" id="IPR017453">
    <property type="entry name" value="GCV_H_sub"/>
</dbReference>
<dbReference type="InterPro" id="IPR011053">
    <property type="entry name" value="Single_hybrid_motif"/>
</dbReference>
<dbReference type="NCBIfam" id="TIGR00527">
    <property type="entry name" value="gcvH"/>
    <property type="match status" value="1"/>
</dbReference>
<dbReference type="NCBIfam" id="NF002270">
    <property type="entry name" value="PRK01202.1"/>
    <property type="match status" value="1"/>
</dbReference>
<dbReference type="PANTHER" id="PTHR11715">
    <property type="entry name" value="GLYCINE CLEAVAGE SYSTEM H PROTEIN"/>
    <property type="match status" value="1"/>
</dbReference>
<dbReference type="PANTHER" id="PTHR11715:SF3">
    <property type="entry name" value="GLYCINE CLEAVAGE SYSTEM H PROTEIN-RELATED"/>
    <property type="match status" value="1"/>
</dbReference>
<dbReference type="Pfam" id="PF01597">
    <property type="entry name" value="GCV_H"/>
    <property type="match status" value="1"/>
</dbReference>
<dbReference type="SUPFAM" id="SSF51230">
    <property type="entry name" value="Single hybrid motif"/>
    <property type="match status" value="1"/>
</dbReference>
<dbReference type="PROSITE" id="PS50968">
    <property type="entry name" value="BIOTINYL_LIPOYL"/>
    <property type="match status" value="1"/>
</dbReference>
<protein>
    <recommendedName>
        <fullName evidence="1">Glycine cleavage system H protein</fullName>
    </recommendedName>
</protein>
<reference key="1">
    <citation type="submission" date="2003-03" db="EMBL/GenBank/DDBJ databases">
        <title>The complete genome sequence of Neisseria gonorrhoeae.</title>
        <authorList>
            <person name="Lewis L.A."/>
            <person name="Gillaspy A.F."/>
            <person name="McLaughlin R.E."/>
            <person name="Gipson M."/>
            <person name="Ducey T.F."/>
            <person name="Ownbey T."/>
            <person name="Hartman K."/>
            <person name="Nydick C."/>
            <person name="Carson M.B."/>
            <person name="Vaughn J."/>
            <person name="Thomson C."/>
            <person name="Song L."/>
            <person name="Lin S."/>
            <person name="Yuan X."/>
            <person name="Najar F."/>
            <person name="Zhan M."/>
            <person name="Ren Q."/>
            <person name="Zhu H."/>
            <person name="Qi S."/>
            <person name="Kenton S.M."/>
            <person name="Lai H."/>
            <person name="White J.D."/>
            <person name="Clifton S."/>
            <person name="Roe B.A."/>
            <person name="Dyer D.W."/>
        </authorList>
    </citation>
    <scope>NUCLEOTIDE SEQUENCE [LARGE SCALE GENOMIC DNA]</scope>
    <source>
        <strain>ATCC 700825 / FA 1090</strain>
    </source>
</reference>
<organism>
    <name type="scientific">Neisseria gonorrhoeae (strain ATCC 700825 / FA 1090)</name>
    <dbReference type="NCBI Taxonomy" id="242231"/>
    <lineage>
        <taxon>Bacteria</taxon>
        <taxon>Pseudomonadati</taxon>
        <taxon>Pseudomonadota</taxon>
        <taxon>Betaproteobacteria</taxon>
        <taxon>Neisseriales</taxon>
        <taxon>Neisseriaceae</taxon>
        <taxon>Neisseria</taxon>
    </lineage>
</organism>
<gene>
    <name evidence="1" type="primary">gcvH</name>
    <name type="ordered locus">NGO_1404</name>
</gene>